<accession>Q9XLE1</accession>
<gene>
    <name type="primary">MT-CYB</name>
    <name type="synonym">COB</name>
    <name type="synonym">CYTB</name>
    <name type="synonym">MTCYB</name>
</gene>
<name>CYB_REDFU</name>
<geneLocation type="mitochondrion"/>
<sequence length="379" mass="42799">MTNIRKTHPLMKIVNNAFIDLPAPSNISSWWNFGSLLGICLMLQILTGLFLAMHYTSDTATAFSSVTHICRDVNYGWIIRYMHANGASMFFICLFMHVGRGLYYGSYMFLETWNIGVILLFATMATAFMGYVLPWGQMSFWGATVITNLLSAIPYIGTNLVEWIWGGFSVDKATLTRFFAFHFILPFIIMALAMVHLLFLHETGSNNPTGISSDVDKIPFHPYYTIKDILGALLLILALMLLVLFTPDLLGDPDNYTPANPLNTPPHIKPEWYFLFAYAILRSIPNKLGGVLALVLSILILVLMPLLHTSKQRSMMFRPISQCLFWILVADLLTLTWIGGQPVEHPYIIIGQLASIMYFLLILILMPTASTIENNLLKW</sequence>
<feature type="chain" id="PRO_0000061492" description="Cytochrome b">
    <location>
        <begin position="1"/>
        <end position="379"/>
    </location>
</feature>
<feature type="transmembrane region" description="Helical" evidence="2">
    <location>
        <begin position="33"/>
        <end position="53"/>
    </location>
</feature>
<feature type="transmembrane region" description="Helical" evidence="2">
    <location>
        <begin position="77"/>
        <end position="98"/>
    </location>
</feature>
<feature type="transmembrane region" description="Helical" evidence="2">
    <location>
        <begin position="113"/>
        <end position="133"/>
    </location>
</feature>
<feature type="transmembrane region" description="Helical" evidence="2">
    <location>
        <begin position="178"/>
        <end position="198"/>
    </location>
</feature>
<feature type="transmembrane region" description="Helical" evidence="2">
    <location>
        <begin position="226"/>
        <end position="246"/>
    </location>
</feature>
<feature type="transmembrane region" description="Helical" evidence="2">
    <location>
        <begin position="288"/>
        <end position="308"/>
    </location>
</feature>
<feature type="transmembrane region" description="Helical" evidence="2">
    <location>
        <begin position="320"/>
        <end position="340"/>
    </location>
</feature>
<feature type="transmembrane region" description="Helical" evidence="2">
    <location>
        <begin position="347"/>
        <end position="367"/>
    </location>
</feature>
<feature type="binding site" description="axial binding residue" evidence="2">
    <location>
        <position position="83"/>
    </location>
    <ligand>
        <name>heme b</name>
        <dbReference type="ChEBI" id="CHEBI:60344"/>
        <label>b562</label>
    </ligand>
    <ligandPart>
        <name>Fe</name>
        <dbReference type="ChEBI" id="CHEBI:18248"/>
    </ligandPart>
</feature>
<feature type="binding site" description="axial binding residue" evidence="2">
    <location>
        <position position="97"/>
    </location>
    <ligand>
        <name>heme b</name>
        <dbReference type="ChEBI" id="CHEBI:60344"/>
        <label>b566</label>
    </ligand>
    <ligandPart>
        <name>Fe</name>
        <dbReference type="ChEBI" id="CHEBI:18248"/>
    </ligandPart>
</feature>
<feature type="binding site" description="axial binding residue" evidence="2">
    <location>
        <position position="182"/>
    </location>
    <ligand>
        <name>heme b</name>
        <dbReference type="ChEBI" id="CHEBI:60344"/>
        <label>b562</label>
    </ligand>
    <ligandPart>
        <name>Fe</name>
        <dbReference type="ChEBI" id="CHEBI:18248"/>
    </ligandPart>
</feature>
<feature type="binding site" description="axial binding residue" evidence="2">
    <location>
        <position position="196"/>
    </location>
    <ligand>
        <name>heme b</name>
        <dbReference type="ChEBI" id="CHEBI:60344"/>
        <label>b566</label>
    </ligand>
    <ligandPart>
        <name>Fe</name>
        <dbReference type="ChEBI" id="CHEBI:18248"/>
    </ligandPart>
</feature>
<feature type="binding site" evidence="2">
    <location>
        <position position="201"/>
    </location>
    <ligand>
        <name>a ubiquinone</name>
        <dbReference type="ChEBI" id="CHEBI:16389"/>
    </ligand>
</feature>
<keyword id="KW-0249">Electron transport</keyword>
<keyword id="KW-0349">Heme</keyword>
<keyword id="KW-0408">Iron</keyword>
<keyword id="KW-0472">Membrane</keyword>
<keyword id="KW-0479">Metal-binding</keyword>
<keyword id="KW-0496">Mitochondrion</keyword>
<keyword id="KW-0999">Mitochondrion inner membrane</keyword>
<keyword id="KW-0679">Respiratory chain</keyword>
<keyword id="KW-0812">Transmembrane</keyword>
<keyword id="KW-1133">Transmembrane helix</keyword>
<keyword id="KW-0813">Transport</keyword>
<keyword id="KW-0830">Ubiquinone</keyword>
<proteinExistence type="inferred from homology"/>
<organism>
    <name type="scientific">Redunca fulvorufula</name>
    <name type="common">Mountain reedbuck</name>
    <dbReference type="NCBI Taxonomy" id="59555"/>
    <lineage>
        <taxon>Eukaryota</taxon>
        <taxon>Metazoa</taxon>
        <taxon>Chordata</taxon>
        <taxon>Craniata</taxon>
        <taxon>Vertebrata</taxon>
        <taxon>Euteleostomi</taxon>
        <taxon>Mammalia</taxon>
        <taxon>Eutheria</taxon>
        <taxon>Laurasiatheria</taxon>
        <taxon>Artiodactyla</taxon>
        <taxon>Ruminantia</taxon>
        <taxon>Pecora</taxon>
        <taxon>Bovidae</taxon>
        <taxon>Reduncinae</taxon>
        <taxon>Redunca</taxon>
    </lineage>
</organism>
<protein>
    <recommendedName>
        <fullName>Cytochrome b</fullName>
    </recommendedName>
    <alternativeName>
        <fullName>Complex III subunit 3</fullName>
    </alternativeName>
    <alternativeName>
        <fullName>Complex III subunit III</fullName>
    </alternativeName>
    <alternativeName>
        <fullName>Cytochrome b-c1 complex subunit 3</fullName>
    </alternativeName>
    <alternativeName>
        <fullName>Ubiquinol-cytochrome-c reductase complex cytochrome b subunit</fullName>
    </alternativeName>
</protein>
<dbReference type="EMBL" id="AF096627">
    <property type="protein sequence ID" value="AAD27799.1"/>
    <property type="molecule type" value="Genomic_DNA"/>
</dbReference>
<dbReference type="SMR" id="Q9XLE1"/>
<dbReference type="GO" id="GO:0005743">
    <property type="term" value="C:mitochondrial inner membrane"/>
    <property type="evidence" value="ECO:0007669"/>
    <property type="project" value="UniProtKB-SubCell"/>
</dbReference>
<dbReference type="GO" id="GO:0045275">
    <property type="term" value="C:respiratory chain complex III"/>
    <property type="evidence" value="ECO:0007669"/>
    <property type="project" value="InterPro"/>
</dbReference>
<dbReference type="GO" id="GO:0046872">
    <property type="term" value="F:metal ion binding"/>
    <property type="evidence" value="ECO:0007669"/>
    <property type="project" value="UniProtKB-KW"/>
</dbReference>
<dbReference type="GO" id="GO:0008121">
    <property type="term" value="F:ubiquinol-cytochrome-c reductase activity"/>
    <property type="evidence" value="ECO:0007669"/>
    <property type="project" value="InterPro"/>
</dbReference>
<dbReference type="GO" id="GO:0006122">
    <property type="term" value="P:mitochondrial electron transport, ubiquinol to cytochrome c"/>
    <property type="evidence" value="ECO:0007669"/>
    <property type="project" value="TreeGrafter"/>
</dbReference>
<dbReference type="CDD" id="cd00290">
    <property type="entry name" value="cytochrome_b_C"/>
    <property type="match status" value="1"/>
</dbReference>
<dbReference type="CDD" id="cd00284">
    <property type="entry name" value="Cytochrome_b_N"/>
    <property type="match status" value="1"/>
</dbReference>
<dbReference type="FunFam" id="1.20.810.10:FF:000002">
    <property type="entry name" value="Cytochrome b"/>
    <property type="match status" value="1"/>
</dbReference>
<dbReference type="Gene3D" id="1.20.810.10">
    <property type="entry name" value="Cytochrome Bc1 Complex, Chain C"/>
    <property type="match status" value="1"/>
</dbReference>
<dbReference type="InterPro" id="IPR005798">
    <property type="entry name" value="Cyt_b/b6_C"/>
</dbReference>
<dbReference type="InterPro" id="IPR036150">
    <property type="entry name" value="Cyt_b/b6_C_sf"/>
</dbReference>
<dbReference type="InterPro" id="IPR005797">
    <property type="entry name" value="Cyt_b/b6_N"/>
</dbReference>
<dbReference type="InterPro" id="IPR027387">
    <property type="entry name" value="Cytb/b6-like_sf"/>
</dbReference>
<dbReference type="InterPro" id="IPR030689">
    <property type="entry name" value="Cytochrome_b"/>
</dbReference>
<dbReference type="InterPro" id="IPR048260">
    <property type="entry name" value="Cytochrome_b_C_euk/bac"/>
</dbReference>
<dbReference type="InterPro" id="IPR048259">
    <property type="entry name" value="Cytochrome_b_N_euk/bac"/>
</dbReference>
<dbReference type="InterPro" id="IPR016174">
    <property type="entry name" value="Di-haem_cyt_TM"/>
</dbReference>
<dbReference type="PANTHER" id="PTHR19271">
    <property type="entry name" value="CYTOCHROME B"/>
    <property type="match status" value="1"/>
</dbReference>
<dbReference type="PANTHER" id="PTHR19271:SF16">
    <property type="entry name" value="CYTOCHROME B"/>
    <property type="match status" value="1"/>
</dbReference>
<dbReference type="Pfam" id="PF00032">
    <property type="entry name" value="Cytochrom_B_C"/>
    <property type="match status" value="1"/>
</dbReference>
<dbReference type="Pfam" id="PF00033">
    <property type="entry name" value="Cytochrome_B"/>
    <property type="match status" value="1"/>
</dbReference>
<dbReference type="PIRSF" id="PIRSF038885">
    <property type="entry name" value="COB"/>
    <property type="match status" value="1"/>
</dbReference>
<dbReference type="SUPFAM" id="SSF81648">
    <property type="entry name" value="a domain/subunit of cytochrome bc1 complex (Ubiquinol-cytochrome c reductase)"/>
    <property type="match status" value="1"/>
</dbReference>
<dbReference type="SUPFAM" id="SSF81342">
    <property type="entry name" value="Transmembrane di-heme cytochromes"/>
    <property type="match status" value="1"/>
</dbReference>
<dbReference type="PROSITE" id="PS51003">
    <property type="entry name" value="CYTB_CTER"/>
    <property type="match status" value="1"/>
</dbReference>
<dbReference type="PROSITE" id="PS51002">
    <property type="entry name" value="CYTB_NTER"/>
    <property type="match status" value="1"/>
</dbReference>
<comment type="function">
    <text evidence="2">Component of the ubiquinol-cytochrome c reductase complex (complex III or cytochrome b-c1 complex) that is part of the mitochondrial respiratory chain. The b-c1 complex mediates electron transfer from ubiquinol to cytochrome c. Contributes to the generation of a proton gradient across the mitochondrial membrane that is then used for ATP synthesis.</text>
</comment>
<comment type="cofactor">
    <cofactor evidence="2">
        <name>heme b</name>
        <dbReference type="ChEBI" id="CHEBI:60344"/>
    </cofactor>
    <text evidence="2">Binds 2 heme b groups non-covalently.</text>
</comment>
<comment type="subunit">
    <text evidence="2">The cytochrome bc1 complex contains 11 subunits: 3 respiratory subunits (MT-CYB, CYC1 and UQCRFS1), 2 core proteins (UQCRC1 and UQCRC2) and 6 low-molecular weight proteins (UQCRH/QCR6, UQCRB/QCR7, UQCRQ/QCR8, UQCR10/QCR9, UQCR11/QCR10 and a cleavage product of UQCRFS1). This cytochrome bc1 complex then forms a dimer.</text>
</comment>
<comment type="subcellular location">
    <subcellularLocation>
        <location evidence="2">Mitochondrion inner membrane</location>
        <topology evidence="2">Multi-pass membrane protein</topology>
    </subcellularLocation>
</comment>
<comment type="miscellaneous">
    <text evidence="1">Heme 1 (or BL or b562) is low-potential and absorbs at about 562 nm, and heme 2 (or BH or b566) is high-potential and absorbs at about 566 nm.</text>
</comment>
<comment type="similarity">
    <text evidence="3 4">Belongs to the cytochrome b family.</text>
</comment>
<comment type="caution">
    <text evidence="2">The full-length protein contains only eight transmembrane helices, not nine as predicted by bioinformatics tools.</text>
</comment>
<reference key="1">
    <citation type="journal article" date="2001" name="J. Mammal. Evol.">
        <title>Molecular systematics and phylogenetics of the reduncini (Artiodactyla: Bovidae) inferred from the analysis of mitochondrial cytochrome b gene sequences.</title>
        <authorList>
            <person name="Birungi J."/>
            <person name="Arctander P."/>
        </authorList>
    </citation>
    <scope>NUCLEOTIDE SEQUENCE [GENOMIC DNA]</scope>
</reference>
<evidence type="ECO:0000250" key="1"/>
<evidence type="ECO:0000250" key="2">
    <source>
        <dbReference type="UniProtKB" id="P00157"/>
    </source>
</evidence>
<evidence type="ECO:0000255" key="3">
    <source>
        <dbReference type="PROSITE-ProRule" id="PRU00967"/>
    </source>
</evidence>
<evidence type="ECO:0000255" key="4">
    <source>
        <dbReference type="PROSITE-ProRule" id="PRU00968"/>
    </source>
</evidence>